<feature type="chain" id="PRO_0000178765" description="D-tagatose-1,6-bisphosphate aldolase subunit KbaY">
    <location>
        <begin position="1"/>
        <end position="286"/>
    </location>
</feature>
<feature type="active site" description="Proton donor" evidence="1">
    <location>
        <position position="82"/>
    </location>
</feature>
<feature type="binding site" evidence="1">
    <location>
        <position position="83"/>
    </location>
    <ligand>
        <name>Zn(2+)</name>
        <dbReference type="ChEBI" id="CHEBI:29105"/>
        <note>catalytic</note>
    </ligand>
</feature>
<feature type="binding site" evidence="1">
    <location>
        <position position="180"/>
    </location>
    <ligand>
        <name>Zn(2+)</name>
        <dbReference type="ChEBI" id="CHEBI:29105"/>
        <note>catalytic</note>
    </ligand>
</feature>
<feature type="binding site" evidence="1">
    <location>
        <position position="181"/>
    </location>
    <ligand>
        <name>dihydroxyacetone phosphate</name>
        <dbReference type="ChEBI" id="CHEBI:57642"/>
    </ligand>
</feature>
<feature type="binding site" evidence="1">
    <location>
        <position position="208"/>
    </location>
    <ligand>
        <name>Zn(2+)</name>
        <dbReference type="ChEBI" id="CHEBI:29105"/>
        <note>catalytic</note>
    </ligand>
</feature>
<feature type="binding site" evidence="1">
    <location>
        <begin position="209"/>
        <end position="211"/>
    </location>
    <ligand>
        <name>dihydroxyacetone phosphate</name>
        <dbReference type="ChEBI" id="CHEBI:57642"/>
    </ligand>
</feature>
<feature type="binding site" evidence="1">
    <location>
        <begin position="230"/>
        <end position="233"/>
    </location>
    <ligand>
        <name>dihydroxyacetone phosphate</name>
        <dbReference type="ChEBI" id="CHEBI:57642"/>
    </ligand>
</feature>
<evidence type="ECO:0000255" key="1">
    <source>
        <dbReference type="HAMAP-Rule" id="MF_01293"/>
    </source>
</evidence>
<proteinExistence type="inferred from homology"/>
<comment type="function">
    <text evidence="1">Catalytic subunit of the tagatose-1,6-bisphosphate aldolase KbaYZ, which catalyzes the reversible aldol condensation of dihydroxyacetone phosphate (DHAP or glycerone-phosphate) with glyceraldehyde 3-phosphate (G3P) to produce tagatose 1,6-bisphosphate (TBP). Requires KbaZ subunit for full activity and stability.</text>
</comment>
<comment type="catalytic activity">
    <reaction evidence="1">
        <text>D-tagatofuranose 1,6-bisphosphate = D-glyceraldehyde 3-phosphate + dihydroxyacetone phosphate</text>
        <dbReference type="Rhea" id="RHEA:22948"/>
        <dbReference type="ChEBI" id="CHEBI:57642"/>
        <dbReference type="ChEBI" id="CHEBI:58694"/>
        <dbReference type="ChEBI" id="CHEBI:59776"/>
        <dbReference type="EC" id="4.1.2.40"/>
    </reaction>
</comment>
<comment type="cofactor">
    <cofactor evidence="1">
        <name>Zn(2+)</name>
        <dbReference type="ChEBI" id="CHEBI:29105"/>
    </cofactor>
    <text evidence="1">Binds 1 zinc ion per subunit.</text>
</comment>
<comment type="pathway">
    <text evidence="1">Carbohydrate metabolism; D-tagatose 6-phosphate degradation; D-glyceraldehyde 3-phosphate and glycerone phosphate from D-tagatose 6-phosphate: step 2/2.</text>
</comment>
<comment type="subunit">
    <text evidence="1">Homotetramer. Forms a complex with KbaZ.</text>
</comment>
<comment type="similarity">
    <text evidence="1">Belongs to the class II fructose-bisphosphate aldolase family. TagBP aldolase KbaY subfamily.</text>
</comment>
<accession>P0AB75</accession>
<accession>P42908</accession>
<dbReference type="EC" id="4.1.2.40" evidence="1"/>
<dbReference type="EMBL" id="AE014075">
    <property type="protein sequence ID" value="AAN82335.1"/>
    <property type="molecule type" value="Genomic_DNA"/>
</dbReference>
<dbReference type="RefSeq" id="WP_000022766.1">
    <property type="nucleotide sequence ID" value="NZ_CP051263.1"/>
</dbReference>
<dbReference type="SMR" id="P0AB75"/>
<dbReference type="STRING" id="199310.c3894"/>
<dbReference type="GeneID" id="75203745"/>
<dbReference type="KEGG" id="ecc:c3894"/>
<dbReference type="eggNOG" id="COG0191">
    <property type="taxonomic scope" value="Bacteria"/>
</dbReference>
<dbReference type="HOGENOM" id="CLU_040088_0_1_6"/>
<dbReference type="BioCyc" id="ECOL199310:C3894-MONOMER"/>
<dbReference type="UniPathway" id="UPA00704">
    <property type="reaction ID" value="UER00716"/>
</dbReference>
<dbReference type="Proteomes" id="UP000001410">
    <property type="component" value="Chromosome"/>
</dbReference>
<dbReference type="GO" id="GO:0005829">
    <property type="term" value="C:cytosol"/>
    <property type="evidence" value="ECO:0007669"/>
    <property type="project" value="TreeGrafter"/>
</dbReference>
<dbReference type="GO" id="GO:0009025">
    <property type="term" value="F:tagatose-bisphosphate aldolase activity"/>
    <property type="evidence" value="ECO:0007669"/>
    <property type="project" value="UniProtKB-UniRule"/>
</dbReference>
<dbReference type="GO" id="GO:0008270">
    <property type="term" value="F:zinc ion binding"/>
    <property type="evidence" value="ECO:0007669"/>
    <property type="project" value="UniProtKB-UniRule"/>
</dbReference>
<dbReference type="GO" id="GO:0005975">
    <property type="term" value="P:carbohydrate metabolic process"/>
    <property type="evidence" value="ECO:0007669"/>
    <property type="project" value="InterPro"/>
</dbReference>
<dbReference type="GO" id="GO:2001059">
    <property type="term" value="P:D-tagatose 6-phosphate catabolic process"/>
    <property type="evidence" value="ECO:0007669"/>
    <property type="project" value="UniProtKB-UniRule"/>
</dbReference>
<dbReference type="CDD" id="cd00453">
    <property type="entry name" value="FTBP_aldolase_II"/>
    <property type="match status" value="1"/>
</dbReference>
<dbReference type="FunFam" id="3.20.20.70:FF:000043">
    <property type="entry name" value="D-tagatose-1,6-bisphosphate aldolase subunit GatY"/>
    <property type="match status" value="1"/>
</dbReference>
<dbReference type="Gene3D" id="3.20.20.70">
    <property type="entry name" value="Aldolase class I"/>
    <property type="match status" value="1"/>
</dbReference>
<dbReference type="HAMAP" id="MF_01293">
    <property type="entry name" value="TagBP_aldolase_KbaY"/>
    <property type="match status" value="1"/>
</dbReference>
<dbReference type="InterPro" id="IPR013785">
    <property type="entry name" value="Aldolase_TIM"/>
</dbReference>
<dbReference type="InterPro" id="IPR050246">
    <property type="entry name" value="Class_II_FBP_aldolase"/>
</dbReference>
<dbReference type="InterPro" id="IPR000771">
    <property type="entry name" value="FBA_II"/>
</dbReference>
<dbReference type="InterPro" id="IPR023788">
    <property type="entry name" value="TagBP_ald_KbaY"/>
</dbReference>
<dbReference type="InterPro" id="IPR011288">
    <property type="entry name" value="TagBP_ald_KbaY/GatY"/>
</dbReference>
<dbReference type="NCBIfam" id="TIGR00167">
    <property type="entry name" value="cbbA"/>
    <property type="match status" value="1"/>
</dbReference>
<dbReference type="NCBIfam" id="NF006626">
    <property type="entry name" value="PRK09195.1"/>
    <property type="match status" value="1"/>
</dbReference>
<dbReference type="NCBIfam" id="NF009374">
    <property type="entry name" value="PRK12737.1"/>
    <property type="match status" value="1"/>
</dbReference>
<dbReference type="NCBIfam" id="NF009375">
    <property type="entry name" value="PRK12738.1"/>
    <property type="match status" value="1"/>
</dbReference>
<dbReference type="NCBIfam" id="TIGR01858">
    <property type="entry name" value="tag_bisphos_ald"/>
    <property type="match status" value="1"/>
</dbReference>
<dbReference type="PANTHER" id="PTHR30304">
    <property type="entry name" value="D-TAGATOSE-1,6-BISPHOSPHATE ALDOLASE"/>
    <property type="match status" value="1"/>
</dbReference>
<dbReference type="PANTHER" id="PTHR30304:SF0">
    <property type="entry name" value="D-TAGATOSE-1,6-BISPHOSPHATE ALDOLASE SUBUNIT GATY-RELATED"/>
    <property type="match status" value="1"/>
</dbReference>
<dbReference type="Pfam" id="PF01116">
    <property type="entry name" value="F_bP_aldolase"/>
    <property type="match status" value="1"/>
</dbReference>
<dbReference type="PIRSF" id="PIRSF001359">
    <property type="entry name" value="F_bP_aldolase_II"/>
    <property type="match status" value="1"/>
</dbReference>
<dbReference type="SUPFAM" id="SSF51569">
    <property type="entry name" value="Aldolase"/>
    <property type="match status" value="1"/>
</dbReference>
<dbReference type="PROSITE" id="PS00602">
    <property type="entry name" value="ALDOLASE_CLASS_II_1"/>
    <property type="match status" value="1"/>
</dbReference>
<dbReference type="PROSITE" id="PS00806">
    <property type="entry name" value="ALDOLASE_CLASS_II_2"/>
    <property type="match status" value="1"/>
</dbReference>
<reference key="1">
    <citation type="journal article" date="2002" name="Proc. Natl. Acad. Sci. U.S.A.">
        <title>Extensive mosaic structure revealed by the complete genome sequence of uropathogenic Escherichia coli.</title>
        <authorList>
            <person name="Welch R.A."/>
            <person name="Burland V."/>
            <person name="Plunkett G. III"/>
            <person name="Redford P."/>
            <person name="Roesch P."/>
            <person name="Rasko D."/>
            <person name="Buckles E.L."/>
            <person name="Liou S.-R."/>
            <person name="Boutin A."/>
            <person name="Hackett J."/>
            <person name="Stroud D."/>
            <person name="Mayhew G.F."/>
            <person name="Rose D.J."/>
            <person name="Zhou S."/>
            <person name="Schwartz D.C."/>
            <person name="Perna N.T."/>
            <person name="Mobley H.L.T."/>
            <person name="Donnenberg M.S."/>
            <person name="Blattner F.R."/>
        </authorList>
    </citation>
    <scope>NUCLEOTIDE SEQUENCE [LARGE SCALE GENOMIC DNA]</scope>
    <source>
        <strain>CFT073 / ATCC 700928 / UPEC</strain>
    </source>
</reference>
<name>KBAY_ECOL6</name>
<organism>
    <name type="scientific">Escherichia coli O6:H1 (strain CFT073 / ATCC 700928 / UPEC)</name>
    <dbReference type="NCBI Taxonomy" id="199310"/>
    <lineage>
        <taxon>Bacteria</taxon>
        <taxon>Pseudomonadati</taxon>
        <taxon>Pseudomonadota</taxon>
        <taxon>Gammaproteobacteria</taxon>
        <taxon>Enterobacterales</taxon>
        <taxon>Enterobacteriaceae</taxon>
        <taxon>Escherichia</taxon>
    </lineage>
</organism>
<gene>
    <name evidence="1" type="primary">kbaY</name>
    <name type="synonym">agaY</name>
    <name type="ordered locus">c3894</name>
</gene>
<keyword id="KW-0456">Lyase</keyword>
<keyword id="KW-0479">Metal-binding</keyword>
<keyword id="KW-1185">Reference proteome</keyword>
<keyword id="KW-0862">Zinc</keyword>
<sequence>MSIISTKYLLQDAQANGYAVPAFNIHNAETIQAILEVCSEMRSPVILAGTPGTFKHIALEEIYALCSAYSTTYNMPLALHLDHHESLDDIRRKVHAGVRSAMIDGSHFPFAENVKLVKSVVDFCHSQDCSVEAELGRLGGVEDDMSVDAESAFLTDPQEAKRFVELTGVDSLAVAIGTAHGLYSKTPKIDFQRLAEIREVVDVPLVLHGASDVPDEFVRRTIELGVTKVNVATELKIAFAGAVKAWFAENPQGNDPRYYMRVGMDAMKEVVRNKINVCGSANRISA</sequence>
<protein>
    <recommendedName>
        <fullName evidence="1">D-tagatose-1,6-bisphosphate aldolase subunit KbaY</fullName>
        <shortName evidence="1">TBPA</shortName>
        <shortName evidence="1">TagBP aldolase</shortName>
        <ecNumber evidence="1">4.1.2.40</ecNumber>
    </recommendedName>
    <alternativeName>
        <fullName evidence="1">D-tagatose-bisphosphate aldolase class II</fullName>
    </alternativeName>
    <alternativeName>
        <fullName evidence="1">Ketose 1,6-bisphosphate aldolase class II</fullName>
    </alternativeName>
    <alternativeName>
        <fullName evidence="1">Tagatose-bisphosphate aldolase</fullName>
    </alternativeName>
</protein>